<sequence>MNPEATELLLAGAQELGLDVAPVLDQFAALLVLLQEGNARFNLTALKTERDIVLKHFVDSLTCLGGGHLDGNHQVVDLGTGAGFPTLPLALMRAELQFTPVDSTRKKVEFVRATAEALGLQNVRPVAGRAETLTRQPEHRDRYDRVVVRAVAALPILAELALPFLRPGGLLVAQKGPISPEELRAGQRAAGELGGRVTEVEAFTLPVLGDARTLVVVEKLRDTPDRYPRREGVPNQQPLFWSAK</sequence>
<comment type="function">
    <text evidence="1">Specifically methylates the N7 position of a guanine in 16S rRNA.</text>
</comment>
<comment type="subcellular location">
    <subcellularLocation>
        <location evidence="1">Cytoplasm</location>
    </subcellularLocation>
</comment>
<comment type="similarity">
    <text evidence="1">Belongs to the methyltransferase superfamily. RNA methyltransferase RsmG family.</text>
</comment>
<proteinExistence type="inferred from homology"/>
<accession>C1D0A7</accession>
<gene>
    <name evidence="1" type="primary">rsmG</name>
    <name type="ordered locus">Deide_23400</name>
</gene>
<protein>
    <recommendedName>
        <fullName evidence="1">Ribosomal RNA small subunit methyltransferase G</fullName>
        <ecNumber evidence="1">2.1.1.-</ecNumber>
    </recommendedName>
    <alternativeName>
        <fullName evidence="1">16S rRNA 7-methylguanosine methyltransferase</fullName>
        <shortName evidence="1">16S rRNA m7G methyltransferase</shortName>
    </alternativeName>
</protein>
<feature type="chain" id="PRO_1000202497" description="Ribosomal RNA small subunit methyltransferase G">
    <location>
        <begin position="1"/>
        <end position="244"/>
    </location>
</feature>
<feature type="region of interest" description="Disordered" evidence="2">
    <location>
        <begin position="225"/>
        <end position="244"/>
    </location>
</feature>
<feature type="compositionally biased region" description="Polar residues" evidence="2">
    <location>
        <begin position="234"/>
        <end position="244"/>
    </location>
</feature>
<feature type="binding site" evidence="1">
    <location>
        <position position="79"/>
    </location>
    <ligand>
        <name>S-adenosyl-L-methionine</name>
        <dbReference type="ChEBI" id="CHEBI:59789"/>
    </ligand>
</feature>
<feature type="binding site" evidence="1">
    <location>
        <position position="84"/>
    </location>
    <ligand>
        <name>S-adenosyl-L-methionine</name>
        <dbReference type="ChEBI" id="CHEBI:59789"/>
    </ligand>
</feature>
<feature type="binding site" evidence="1">
    <location>
        <begin position="102"/>
        <end position="104"/>
    </location>
    <ligand>
        <name>S-adenosyl-L-methionine</name>
        <dbReference type="ChEBI" id="CHEBI:59789"/>
    </ligand>
</feature>
<feature type="binding site" evidence="1">
    <location>
        <begin position="130"/>
        <end position="131"/>
    </location>
    <ligand>
        <name>S-adenosyl-L-methionine</name>
        <dbReference type="ChEBI" id="CHEBI:59789"/>
    </ligand>
</feature>
<feature type="binding site" evidence="1">
    <location>
        <position position="149"/>
    </location>
    <ligand>
        <name>S-adenosyl-L-methionine</name>
        <dbReference type="ChEBI" id="CHEBI:59789"/>
    </ligand>
</feature>
<keyword id="KW-0963">Cytoplasm</keyword>
<keyword id="KW-0489">Methyltransferase</keyword>
<keyword id="KW-1185">Reference proteome</keyword>
<keyword id="KW-0698">rRNA processing</keyword>
<keyword id="KW-0949">S-adenosyl-L-methionine</keyword>
<keyword id="KW-0808">Transferase</keyword>
<evidence type="ECO:0000255" key="1">
    <source>
        <dbReference type="HAMAP-Rule" id="MF_00074"/>
    </source>
</evidence>
<evidence type="ECO:0000256" key="2">
    <source>
        <dbReference type="SAM" id="MobiDB-lite"/>
    </source>
</evidence>
<organism>
    <name type="scientific">Deinococcus deserti (strain DSM 17065 / CIP 109153 / LMG 22923 / VCD115)</name>
    <dbReference type="NCBI Taxonomy" id="546414"/>
    <lineage>
        <taxon>Bacteria</taxon>
        <taxon>Thermotogati</taxon>
        <taxon>Deinococcota</taxon>
        <taxon>Deinococci</taxon>
        <taxon>Deinococcales</taxon>
        <taxon>Deinococcaceae</taxon>
        <taxon>Deinococcus</taxon>
    </lineage>
</organism>
<name>RSMG_DEIDV</name>
<reference key="1">
    <citation type="journal article" date="2009" name="PLoS Genet.">
        <title>Alliance of proteomics and genomics to unravel the specificities of Sahara bacterium Deinococcus deserti.</title>
        <authorList>
            <person name="de Groot A."/>
            <person name="Dulermo R."/>
            <person name="Ortet P."/>
            <person name="Blanchard L."/>
            <person name="Guerin P."/>
            <person name="Fernandez B."/>
            <person name="Vacherie B."/>
            <person name="Dossat C."/>
            <person name="Jolivet E."/>
            <person name="Siguier P."/>
            <person name="Chandler M."/>
            <person name="Barakat M."/>
            <person name="Dedieu A."/>
            <person name="Barbe V."/>
            <person name="Heulin T."/>
            <person name="Sommer S."/>
            <person name="Achouak W."/>
            <person name="Armengaud J."/>
        </authorList>
    </citation>
    <scope>NUCLEOTIDE SEQUENCE [LARGE SCALE GENOMIC DNA]</scope>
    <source>
        <strain>DSM 17065 / CIP 109153 / LMG 22923 / VCD115</strain>
    </source>
</reference>
<dbReference type="EC" id="2.1.1.-" evidence="1"/>
<dbReference type="EMBL" id="CP001114">
    <property type="protein sequence ID" value="ACO47376.1"/>
    <property type="molecule type" value="Genomic_DNA"/>
</dbReference>
<dbReference type="RefSeq" id="WP_012694497.1">
    <property type="nucleotide sequence ID" value="NC_012526.1"/>
</dbReference>
<dbReference type="SMR" id="C1D0A7"/>
<dbReference type="STRING" id="546414.Deide_23400"/>
<dbReference type="PaxDb" id="546414-Deide_23400"/>
<dbReference type="KEGG" id="ddr:Deide_23400"/>
<dbReference type="eggNOG" id="COG0357">
    <property type="taxonomic scope" value="Bacteria"/>
</dbReference>
<dbReference type="HOGENOM" id="CLU_065341_0_1_0"/>
<dbReference type="OrthoDB" id="9808773at2"/>
<dbReference type="Proteomes" id="UP000002208">
    <property type="component" value="Chromosome"/>
</dbReference>
<dbReference type="GO" id="GO:0005829">
    <property type="term" value="C:cytosol"/>
    <property type="evidence" value="ECO:0007669"/>
    <property type="project" value="TreeGrafter"/>
</dbReference>
<dbReference type="GO" id="GO:0070043">
    <property type="term" value="F:rRNA (guanine-N7-)-methyltransferase activity"/>
    <property type="evidence" value="ECO:0007669"/>
    <property type="project" value="UniProtKB-UniRule"/>
</dbReference>
<dbReference type="CDD" id="cd02440">
    <property type="entry name" value="AdoMet_MTases"/>
    <property type="match status" value="1"/>
</dbReference>
<dbReference type="FunFam" id="3.40.50.150:FF:000041">
    <property type="entry name" value="Ribosomal RNA small subunit methyltransferase G"/>
    <property type="match status" value="1"/>
</dbReference>
<dbReference type="Gene3D" id="3.40.50.150">
    <property type="entry name" value="Vaccinia Virus protein VP39"/>
    <property type="match status" value="1"/>
</dbReference>
<dbReference type="HAMAP" id="MF_00074">
    <property type="entry name" value="16SrRNA_methyltr_G"/>
    <property type="match status" value="1"/>
</dbReference>
<dbReference type="InterPro" id="IPR003682">
    <property type="entry name" value="rRNA_ssu_MeTfrase_G"/>
</dbReference>
<dbReference type="InterPro" id="IPR029063">
    <property type="entry name" value="SAM-dependent_MTases_sf"/>
</dbReference>
<dbReference type="NCBIfam" id="TIGR00138">
    <property type="entry name" value="rsmG_gidB"/>
    <property type="match status" value="1"/>
</dbReference>
<dbReference type="PANTHER" id="PTHR31760">
    <property type="entry name" value="S-ADENOSYL-L-METHIONINE-DEPENDENT METHYLTRANSFERASES SUPERFAMILY PROTEIN"/>
    <property type="match status" value="1"/>
</dbReference>
<dbReference type="PANTHER" id="PTHR31760:SF0">
    <property type="entry name" value="S-ADENOSYL-L-METHIONINE-DEPENDENT METHYLTRANSFERASES SUPERFAMILY PROTEIN"/>
    <property type="match status" value="1"/>
</dbReference>
<dbReference type="Pfam" id="PF02527">
    <property type="entry name" value="GidB"/>
    <property type="match status" value="1"/>
</dbReference>
<dbReference type="PIRSF" id="PIRSF003078">
    <property type="entry name" value="GidB"/>
    <property type="match status" value="1"/>
</dbReference>
<dbReference type="SUPFAM" id="SSF53335">
    <property type="entry name" value="S-adenosyl-L-methionine-dependent methyltransferases"/>
    <property type="match status" value="1"/>
</dbReference>